<gene>
    <name type="ordered locus">MPN_152</name>
    <name type="ORF">E07_orf794</name>
    <name type="ORF">MP002</name>
</gene>
<evidence type="ECO:0000255" key="1">
    <source>
        <dbReference type="PROSITE-ProRule" id="PRU00303"/>
    </source>
</evidence>
<evidence type="ECO:0000256" key="2">
    <source>
        <dbReference type="SAM" id="MobiDB-lite"/>
    </source>
</evidence>
<evidence type="ECO:0000305" key="3"/>
<sequence>MKFKYGAIVFSGLLGVSAILAACGARGKFNQVDDGKIKLASSLTSRSASTALQKVVEKYNKVKGVNDYPIEITQIAGGYDGGRTDLQTRVNVKDTTNFYNLILNYPDLVSTLGRVGMELPFDKVKTDKLADRFLDFNNRISAISKKGIYGIPVSLSTEVLSINGPVLHYILNSAQGKVSSVTSVQRTADSGSGTTNNNGVTKPLKIDKENESTKKLWEEIENKAKENGKKTSSSRRKRNLSSSKQMSTQTQPTDNSNDANQSDQAIEKTWGKYQEVEGGLKDYTFKASVFENWHDLLDFSNRVAKSFSNINTNTNKKGTDIQGVLGIDSTPNSLFTSVFAAGGGNYDNFFYKVANGRADFSNFKNKGTSYQNLQKVYGDYKGLIDSNGLFVNKGGSYSSNFQKFHQLAYSISSTSGFFYSFAGENSKRLKFDGGNFIEFPGFTQAIYAPENNSQSGGESGDQTTNNEANLLGTFKIKSSNKSKSSSSKSSTKAETGKTSGGDQNQGKKGEGAQNQGKKGEGAQNQGKNGGVETTIYLYKNSIPSGKNKGENAILIDNKTIVEQLESAAKKEDKKSGESTTEQTQIQSKSVTEQKQPKIIGYTTTGNVHEDNKHIFPIDKLTSDRNFDRKIIVGATEETLDKSNTLQSNEAIVLPAPSKYKSTDTNKVTITQGPNIIGIHVNEKENAETQKFVDWFLNSPQTWEGKGKGKEQTNKTAAEFFAESASYILPLKEIFEQKNEKKEGSDQKDSKSNGRGKQTNLYTEKALELFRGISTDQIVSYSDQVTLGVVVSVME</sequence>
<reference key="1">
    <citation type="journal article" date="1996" name="Nucleic Acids Res.">
        <title>Complete sequence analysis of the genome of the bacterium Mycoplasma pneumoniae.</title>
        <authorList>
            <person name="Himmelreich R."/>
            <person name="Hilbert H."/>
            <person name="Plagens H."/>
            <person name="Pirkl E."/>
            <person name="Li B.-C."/>
            <person name="Herrmann R."/>
        </authorList>
    </citation>
    <scope>NUCLEOTIDE SEQUENCE [LARGE SCALE GENOMIC DNA]</scope>
    <source>
        <strain>ATCC 29342 / M129 / Subtype 1</strain>
    </source>
</reference>
<keyword id="KW-1003">Cell membrane</keyword>
<keyword id="KW-0449">Lipoprotein</keyword>
<keyword id="KW-0472">Membrane</keyword>
<keyword id="KW-0564">Palmitate</keyword>
<keyword id="KW-1185">Reference proteome</keyword>
<keyword id="KW-0732">Signal</keyword>
<organism>
    <name type="scientific">Mycoplasma pneumoniae (strain ATCC 29342 / M129 / Subtype 1)</name>
    <name type="common">Mycoplasmoides pneumoniae</name>
    <dbReference type="NCBI Taxonomy" id="272634"/>
    <lineage>
        <taxon>Bacteria</taxon>
        <taxon>Bacillati</taxon>
        <taxon>Mycoplasmatota</taxon>
        <taxon>Mycoplasmoidales</taxon>
        <taxon>Mycoplasmoidaceae</taxon>
        <taxon>Mycoplasmoides</taxon>
    </lineage>
</organism>
<feature type="signal peptide" evidence="1">
    <location>
        <begin position="1"/>
        <end position="22"/>
    </location>
</feature>
<feature type="chain" id="PRO_0000018726" description="Uncharacterized lipoprotein MPN_152">
    <location>
        <begin position="23"/>
        <end position="794"/>
    </location>
</feature>
<feature type="region of interest" description="Disordered" evidence="2">
    <location>
        <begin position="182"/>
        <end position="208"/>
    </location>
</feature>
<feature type="region of interest" description="Disordered" evidence="2">
    <location>
        <begin position="222"/>
        <end position="261"/>
    </location>
</feature>
<feature type="region of interest" description="Disordered" evidence="2">
    <location>
        <begin position="474"/>
        <end position="529"/>
    </location>
</feature>
<feature type="region of interest" description="Disordered" evidence="2">
    <location>
        <begin position="566"/>
        <end position="594"/>
    </location>
</feature>
<feature type="region of interest" description="Disordered" evidence="2">
    <location>
        <begin position="737"/>
        <end position="757"/>
    </location>
</feature>
<feature type="compositionally biased region" description="Polar residues" evidence="2">
    <location>
        <begin position="182"/>
        <end position="200"/>
    </location>
</feature>
<feature type="compositionally biased region" description="Polar residues" evidence="2">
    <location>
        <begin position="245"/>
        <end position="261"/>
    </location>
</feature>
<feature type="compositionally biased region" description="Low complexity" evidence="2">
    <location>
        <begin position="475"/>
        <end position="501"/>
    </location>
</feature>
<feature type="compositionally biased region" description="Polar residues" evidence="2">
    <location>
        <begin position="511"/>
        <end position="526"/>
    </location>
</feature>
<feature type="compositionally biased region" description="Basic and acidic residues" evidence="2">
    <location>
        <begin position="567"/>
        <end position="576"/>
    </location>
</feature>
<feature type="compositionally biased region" description="Polar residues" evidence="2">
    <location>
        <begin position="577"/>
        <end position="593"/>
    </location>
</feature>
<feature type="compositionally biased region" description="Basic and acidic residues" evidence="2">
    <location>
        <begin position="737"/>
        <end position="751"/>
    </location>
</feature>
<feature type="lipid moiety-binding region" description="N-palmitoyl cysteine" evidence="1">
    <location>
        <position position="23"/>
    </location>
</feature>
<feature type="lipid moiety-binding region" description="S-diacylglycerol cysteine" evidence="1">
    <location>
        <position position="23"/>
    </location>
</feature>
<protein>
    <recommendedName>
        <fullName>Uncharacterized lipoprotein MPN_152</fullName>
    </recommendedName>
</protein>
<comment type="subcellular location">
    <subcellularLocation>
        <location evidence="1">Cell membrane</location>
        <topology evidence="1">Lipid-anchor</topology>
    </subcellularLocation>
</comment>
<comment type="similarity">
    <text evidence="3">Belongs to the MG185/MG260 family.</text>
</comment>
<name>Y152_MYCPN</name>
<proteinExistence type="inferred from homology"/>
<dbReference type="EMBL" id="U00089">
    <property type="protein sequence ID" value="AAB95650.1"/>
    <property type="molecule type" value="Genomic_DNA"/>
</dbReference>
<dbReference type="PIR" id="S73328">
    <property type="entry name" value="S73328"/>
</dbReference>
<dbReference type="RefSeq" id="NP_109840.1">
    <property type="nucleotide sequence ID" value="NC_000912.1"/>
</dbReference>
<dbReference type="STRING" id="272634.MPN_152"/>
<dbReference type="EnsemblBacteria" id="AAB95650">
    <property type="protein sequence ID" value="AAB95650"/>
    <property type="gene ID" value="MPN_152"/>
</dbReference>
<dbReference type="KEGG" id="mpn:MPN_152"/>
<dbReference type="PATRIC" id="fig|272634.6.peg.169"/>
<dbReference type="HOGENOM" id="CLU_017227_1_0_14"/>
<dbReference type="OrthoDB" id="393769at2"/>
<dbReference type="BioCyc" id="MPNE272634:G1GJ3-256-MONOMER"/>
<dbReference type="Proteomes" id="UP000000808">
    <property type="component" value="Chromosome"/>
</dbReference>
<dbReference type="GO" id="GO:0005886">
    <property type="term" value="C:plasma membrane"/>
    <property type="evidence" value="ECO:0007669"/>
    <property type="project" value="UniProtKB-SubCell"/>
</dbReference>
<dbReference type="InterPro" id="IPR004890">
    <property type="entry name" value="Lipoprotein_10_C"/>
</dbReference>
<dbReference type="InterPro" id="IPR004984">
    <property type="entry name" value="Mycoplasma_lipoprotein_cen_dom"/>
</dbReference>
<dbReference type="Pfam" id="PF03202">
    <property type="entry name" value="Lipoprotein_10"/>
    <property type="match status" value="1"/>
</dbReference>
<dbReference type="Pfam" id="PF03305">
    <property type="entry name" value="Lipoprotein_X"/>
    <property type="match status" value="1"/>
</dbReference>
<dbReference type="PROSITE" id="PS51257">
    <property type="entry name" value="PROKAR_LIPOPROTEIN"/>
    <property type="match status" value="1"/>
</dbReference>
<accession>P75034</accession>